<accession>Q2FZ68</accession>
<gene>
    <name evidence="1" type="primary">fmt</name>
    <name type="ordered locus">SAOUHSC_01183</name>
</gene>
<evidence type="ECO:0000255" key="1">
    <source>
        <dbReference type="HAMAP-Rule" id="MF_00182"/>
    </source>
</evidence>
<dbReference type="EC" id="2.1.2.9" evidence="1"/>
<dbReference type="EMBL" id="CP000253">
    <property type="protein sequence ID" value="ABD30290.1"/>
    <property type="molecule type" value="Genomic_DNA"/>
</dbReference>
<dbReference type="RefSeq" id="WP_000161299.1">
    <property type="nucleotide sequence ID" value="NZ_LS483365.1"/>
</dbReference>
<dbReference type="RefSeq" id="YP_499722.1">
    <property type="nucleotide sequence ID" value="NC_007795.1"/>
</dbReference>
<dbReference type="SMR" id="Q2FZ68"/>
<dbReference type="STRING" id="93061.SAOUHSC_01183"/>
<dbReference type="PaxDb" id="1280-SAXN108_1215"/>
<dbReference type="GeneID" id="3919316"/>
<dbReference type="KEGG" id="sao:SAOUHSC_01183"/>
<dbReference type="PATRIC" id="fig|93061.5.peg.1086"/>
<dbReference type="eggNOG" id="COG0223">
    <property type="taxonomic scope" value="Bacteria"/>
</dbReference>
<dbReference type="HOGENOM" id="CLU_033347_1_1_9"/>
<dbReference type="OrthoDB" id="9802815at2"/>
<dbReference type="PRO" id="PR:Q2FZ68"/>
<dbReference type="Proteomes" id="UP000008816">
    <property type="component" value="Chromosome"/>
</dbReference>
<dbReference type="GO" id="GO:0005829">
    <property type="term" value="C:cytosol"/>
    <property type="evidence" value="ECO:0000318"/>
    <property type="project" value="GO_Central"/>
</dbReference>
<dbReference type="GO" id="GO:0004479">
    <property type="term" value="F:methionyl-tRNA formyltransferase activity"/>
    <property type="evidence" value="ECO:0000318"/>
    <property type="project" value="GO_Central"/>
</dbReference>
<dbReference type="GO" id="GO:0071951">
    <property type="term" value="P:conversion of methionyl-tRNA to N-formyl-methionyl-tRNA"/>
    <property type="evidence" value="ECO:0000318"/>
    <property type="project" value="GO_Central"/>
</dbReference>
<dbReference type="CDD" id="cd08646">
    <property type="entry name" value="FMT_core_Met-tRNA-FMT_N"/>
    <property type="match status" value="1"/>
</dbReference>
<dbReference type="CDD" id="cd08704">
    <property type="entry name" value="Met_tRNA_FMT_C"/>
    <property type="match status" value="1"/>
</dbReference>
<dbReference type="FunFam" id="3.40.50.170:FF:000004">
    <property type="entry name" value="Methionyl-tRNA formyltransferase"/>
    <property type="match status" value="1"/>
</dbReference>
<dbReference type="Gene3D" id="3.10.25.10">
    <property type="entry name" value="Formyl transferase, C-terminal domain"/>
    <property type="match status" value="1"/>
</dbReference>
<dbReference type="Gene3D" id="3.40.50.170">
    <property type="entry name" value="Formyl transferase, N-terminal domain"/>
    <property type="match status" value="1"/>
</dbReference>
<dbReference type="HAMAP" id="MF_00182">
    <property type="entry name" value="Formyl_trans"/>
    <property type="match status" value="1"/>
</dbReference>
<dbReference type="InterPro" id="IPR005794">
    <property type="entry name" value="Fmt"/>
</dbReference>
<dbReference type="InterPro" id="IPR005793">
    <property type="entry name" value="Formyl_trans_C"/>
</dbReference>
<dbReference type="InterPro" id="IPR037022">
    <property type="entry name" value="Formyl_trans_C_sf"/>
</dbReference>
<dbReference type="InterPro" id="IPR002376">
    <property type="entry name" value="Formyl_transf_N"/>
</dbReference>
<dbReference type="InterPro" id="IPR036477">
    <property type="entry name" value="Formyl_transf_N_sf"/>
</dbReference>
<dbReference type="InterPro" id="IPR011034">
    <property type="entry name" value="Formyl_transferase-like_C_sf"/>
</dbReference>
<dbReference type="InterPro" id="IPR001555">
    <property type="entry name" value="GART_AS"/>
</dbReference>
<dbReference type="InterPro" id="IPR044135">
    <property type="entry name" value="Met-tRNA-FMT_C"/>
</dbReference>
<dbReference type="InterPro" id="IPR041711">
    <property type="entry name" value="Met-tRNA-FMT_N"/>
</dbReference>
<dbReference type="NCBIfam" id="TIGR00460">
    <property type="entry name" value="fmt"/>
    <property type="match status" value="1"/>
</dbReference>
<dbReference type="PANTHER" id="PTHR11138">
    <property type="entry name" value="METHIONYL-TRNA FORMYLTRANSFERASE"/>
    <property type="match status" value="1"/>
</dbReference>
<dbReference type="PANTHER" id="PTHR11138:SF5">
    <property type="entry name" value="METHIONYL-TRNA FORMYLTRANSFERASE, MITOCHONDRIAL"/>
    <property type="match status" value="1"/>
</dbReference>
<dbReference type="Pfam" id="PF02911">
    <property type="entry name" value="Formyl_trans_C"/>
    <property type="match status" value="1"/>
</dbReference>
<dbReference type="Pfam" id="PF00551">
    <property type="entry name" value="Formyl_trans_N"/>
    <property type="match status" value="1"/>
</dbReference>
<dbReference type="SUPFAM" id="SSF50486">
    <property type="entry name" value="FMT C-terminal domain-like"/>
    <property type="match status" value="1"/>
</dbReference>
<dbReference type="SUPFAM" id="SSF53328">
    <property type="entry name" value="Formyltransferase"/>
    <property type="match status" value="1"/>
</dbReference>
<dbReference type="PROSITE" id="PS00373">
    <property type="entry name" value="GART"/>
    <property type="match status" value="1"/>
</dbReference>
<sequence>MTKIIFMGTPDFSTTVLEMLIAEHDVIAVVTQPDRPVGRKRVMTPPPVKKVAMKYDLPVYQPEKLSGSEELEQLLQLDVDLIVTAAFGQLLPESLLALPNLGAINVHASLLPKYRGGAPIHQAIIDGEQETGITIMYMVKKLDAGNIISQQAIKIEENDNVGTMHDKLSVLGADLLKETLPSIIEGTNESVPQDDTQATFASNIRREDERISWNKPGRQVFNQIRGLSPWPVAYTTMDDTNLKIYDAELVETNKINEPGTIIETTKKAIIVATNDNEAVAIKDMQLAGKKRMLAANYLSGAQNTLVGKKLI</sequence>
<proteinExistence type="inferred from homology"/>
<protein>
    <recommendedName>
        <fullName evidence="1">Methionyl-tRNA formyltransferase</fullName>
        <ecNumber evidence="1">2.1.2.9</ecNumber>
    </recommendedName>
</protein>
<feature type="chain" id="PRO_1000020173" description="Methionyl-tRNA formyltransferase">
    <location>
        <begin position="1"/>
        <end position="311"/>
    </location>
</feature>
<feature type="binding site" evidence="1">
    <location>
        <begin position="109"/>
        <end position="112"/>
    </location>
    <ligand>
        <name>(6S)-5,6,7,8-tetrahydrofolate</name>
        <dbReference type="ChEBI" id="CHEBI:57453"/>
    </ligand>
</feature>
<comment type="function">
    <text evidence="1">Attaches a formyl group to the free amino group of methionyl-tRNA(fMet). The formyl group appears to play a dual role in the initiator identity of N-formylmethionyl-tRNA by promoting its recognition by IF2 and preventing the misappropriation of this tRNA by the elongation apparatus.</text>
</comment>
<comment type="catalytic activity">
    <reaction evidence="1">
        <text>L-methionyl-tRNA(fMet) + (6R)-10-formyltetrahydrofolate = N-formyl-L-methionyl-tRNA(fMet) + (6S)-5,6,7,8-tetrahydrofolate + H(+)</text>
        <dbReference type="Rhea" id="RHEA:24380"/>
        <dbReference type="Rhea" id="RHEA-COMP:9952"/>
        <dbReference type="Rhea" id="RHEA-COMP:9953"/>
        <dbReference type="ChEBI" id="CHEBI:15378"/>
        <dbReference type="ChEBI" id="CHEBI:57453"/>
        <dbReference type="ChEBI" id="CHEBI:78530"/>
        <dbReference type="ChEBI" id="CHEBI:78844"/>
        <dbReference type="ChEBI" id="CHEBI:195366"/>
        <dbReference type="EC" id="2.1.2.9"/>
    </reaction>
</comment>
<comment type="similarity">
    <text evidence="1">Belongs to the Fmt family.</text>
</comment>
<reference key="1">
    <citation type="book" date="2006" name="Gram positive pathogens, 2nd edition">
        <title>The Staphylococcus aureus NCTC 8325 genome.</title>
        <editorList>
            <person name="Fischetti V."/>
            <person name="Novick R."/>
            <person name="Ferretti J."/>
            <person name="Portnoy D."/>
            <person name="Rood J."/>
        </editorList>
        <authorList>
            <person name="Gillaspy A.F."/>
            <person name="Worrell V."/>
            <person name="Orvis J."/>
            <person name="Roe B.A."/>
            <person name="Dyer D.W."/>
            <person name="Iandolo J.J."/>
        </authorList>
    </citation>
    <scope>NUCLEOTIDE SEQUENCE [LARGE SCALE GENOMIC DNA]</scope>
    <source>
        <strain>NCTC 8325 / PS 47</strain>
    </source>
</reference>
<keyword id="KW-0648">Protein biosynthesis</keyword>
<keyword id="KW-1185">Reference proteome</keyword>
<keyword id="KW-0808">Transferase</keyword>
<organism>
    <name type="scientific">Staphylococcus aureus (strain NCTC 8325 / PS 47)</name>
    <dbReference type="NCBI Taxonomy" id="93061"/>
    <lineage>
        <taxon>Bacteria</taxon>
        <taxon>Bacillati</taxon>
        <taxon>Bacillota</taxon>
        <taxon>Bacilli</taxon>
        <taxon>Bacillales</taxon>
        <taxon>Staphylococcaceae</taxon>
        <taxon>Staphylococcus</taxon>
    </lineage>
</organism>
<name>FMT_STAA8</name>